<accession>Q9GZ28</accession>
<comment type="function">
    <text evidence="1">Pigment protein that is intensely purple in color.</text>
</comment>
<comment type="biophysicochemical properties">
    <absorption>
        <max>572 nm</max>
        <text>Exhibits a smaller absorbance peak at 530 nm. The wild-type has a very weak fluorescence emission spectrum which peaks at 595 nm.</text>
    </absorption>
</comment>
<comment type="tissue specificity">
    <text evidence="1">Tentacle tips.</text>
</comment>
<comment type="PTM">
    <text evidence="3">Contains a chromophore consisting of modified amino acid residues. The chromophore is formed by autocatalytic backbone condensation between Xaa-N and Gly-(N+2), oxidation of Tyr-(N+1) to didehydrotyrosine, and formation of a double bond to the alpha-amino nitrogen of residue Tyr-(N+1). Maturation of the chromophore requires nothing other than molecular oxygen.</text>
</comment>
<comment type="biotechnology">
    <text evidence="3">Fluorescent proteins have become a useful and ubiquitous tool for making chimeric proteins, where they function as a fluorescent protein tag. Typically they tolerate N- and C-terminal fusion to a broad variety of proteins. They have been expressed in most known cell types and are used as a noninvasive fluorescent marker in living cells and organisms. They enable a wide range of applications where they have functioned as a cell lineage tracer, reporter of gene expression, or as a measure of protein-protein interactions.</text>
</comment>
<comment type="similarity">
    <text evidence="1">Belongs to the GFP family.</text>
</comment>
<comment type="caution">
    <text evidence="3">Opinions are divided on whether Anemonia viridis (Forsskal, 1775) and Anemonia sulcata (Pennant, 1777) are separate species.</text>
</comment>
<proteinExistence type="evidence at protein level"/>
<dbReference type="EMBL" id="AF246709">
    <property type="protein sequence ID" value="AAG02385.1"/>
    <property type="molecule type" value="mRNA"/>
</dbReference>
<dbReference type="PDB" id="1XMZ">
    <property type="method" value="X-ray"/>
    <property type="resolution" value="1.38 A"/>
    <property type="chains" value="A/B=2-232"/>
</dbReference>
<dbReference type="PDB" id="1XQM">
    <property type="method" value="X-ray"/>
    <property type="resolution" value="2.10 A"/>
    <property type="chains" value="A=5-232"/>
</dbReference>
<dbReference type="PDB" id="2A50">
    <property type="method" value="X-ray"/>
    <property type="resolution" value="1.30 A"/>
    <property type="chains" value="A/C=2-62, B/D=63-232"/>
</dbReference>
<dbReference type="PDB" id="2A52">
    <property type="method" value="X-ray"/>
    <property type="resolution" value="1.70 A"/>
    <property type="chains" value="A/C=2-62, B/D=63-232"/>
</dbReference>
<dbReference type="PDB" id="2A53">
    <property type="method" value="X-ray"/>
    <property type="resolution" value="1.45 A"/>
    <property type="chains" value="A/C=2-62, B/D=63-232"/>
</dbReference>
<dbReference type="PDB" id="2A54">
    <property type="method" value="X-ray"/>
    <property type="resolution" value="1.45 A"/>
    <property type="chains" value="A/C=2-62, B/D=63-232"/>
</dbReference>
<dbReference type="PDB" id="2A56">
    <property type="method" value="X-ray"/>
    <property type="resolution" value="1.90 A"/>
    <property type="chains" value="A/C=2-62, B/D=63-232"/>
</dbReference>
<dbReference type="PDB" id="3CFA">
    <property type="method" value="X-ray"/>
    <property type="resolution" value="1.75 A"/>
    <property type="chains" value="A/B/G/H=63-231, L/M/R/S=14-62"/>
</dbReference>
<dbReference type="PDB" id="3CFF">
    <property type="method" value="X-ray"/>
    <property type="resolution" value="1.80 A"/>
    <property type="chains" value="A/B/G/H=63-231, L/M/R/S=14-62"/>
</dbReference>
<dbReference type="PDB" id="3CFH">
    <property type="method" value="X-ray"/>
    <property type="resolution" value="1.75 A"/>
    <property type="chains" value="A/B/G/H=63-231, L/M/R/S=14-62"/>
</dbReference>
<dbReference type="PDBsum" id="1XMZ"/>
<dbReference type="PDBsum" id="1XQM"/>
<dbReference type="PDBsum" id="2A50"/>
<dbReference type="PDBsum" id="2A52"/>
<dbReference type="PDBsum" id="2A53"/>
<dbReference type="PDBsum" id="2A54"/>
<dbReference type="PDBsum" id="2A56"/>
<dbReference type="PDBsum" id="3CFA"/>
<dbReference type="PDBsum" id="3CFF"/>
<dbReference type="PDBsum" id="3CFH"/>
<dbReference type="SMR" id="Q9GZ28"/>
<dbReference type="EvolutionaryTrace" id="Q9GZ28"/>
<dbReference type="GO" id="GO:0008218">
    <property type="term" value="P:bioluminescence"/>
    <property type="evidence" value="ECO:0007669"/>
    <property type="project" value="UniProtKB-KW"/>
</dbReference>
<dbReference type="Gene3D" id="3.30.1300.40">
    <property type="match status" value="1"/>
</dbReference>
<dbReference type="Gene3D" id="2.40.155.10">
    <property type="entry name" value="Green fluorescent protein"/>
    <property type="match status" value="1"/>
</dbReference>
<dbReference type="InterPro" id="IPR009017">
    <property type="entry name" value="GFP"/>
</dbReference>
<dbReference type="InterPro" id="IPR011584">
    <property type="entry name" value="GFP-related"/>
</dbReference>
<dbReference type="Pfam" id="PF01353">
    <property type="entry name" value="GFP"/>
    <property type="match status" value="1"/>
</dbReference>
<dbReference type="SUPFAM" id="SSF54511">
    <property type="entry name" value="GFP-like"/>
    <property type="match status" value="1"/>
</dbReference>
<protein>
    <recommendedName>
        <fullName>GFP-like non-fluorescent chromoprotein FP595</fullName>
    </recommendedName>
    <alternativeName>
        <fullName>asFP595</fullName>
    </alternativeName>
    <component>
        <recommendedName>
            <fullName>GFP-like non-fluorescent chromoprotein FP595 chain 1</fullName>
        </recommendedName>
    </component>
    <component>
        <recommendedName>
            <fullName>GFP-like non-fluorescent chromoprotein FP595 chain 2</fullName>
        </recommendedName>
    </component>
</protein>
<organism>
    <name type="scientific">Anemonia sulcata</name>
    <name type="common">Mediterranean snakelocks sea anemone</name>
    <dbReference type="NCBI Taxonomy" id="6108"/>
    <lineage>
        <taxon>Eukaryota</taxon>
        <taxon>Metazoa</taxon>
        <taxon>Cnidaria</taxon>
        <taxon>Anthozoa</taxon>
        <taxon>Hexacorallia</taxon>
        <taxon>Actiniaria</taxon>
        <taxon>Actiniidae</taxon>
        <taxon>Anemonia</taxon>
    </lineage>
</organism>
<reference evidence="3 4" key="1">
    <citation type="journal article" date="2000" name="J. Biol. Chem.">
        <title>Natural animal coloration can be determined by a nonfluorescent green fluorescent protein homolog.</title>
        <authorList>
            <person name="Lukyanov K.A."/>
            <person name="Fradkov A.F."/>
            <person name="Gurskaya N.G."/>
            <person name="Matz M.V."/>
            <person name="Labas Y.A."/>
            <person name="Savitsky A.P."/>
            <person name="Markelov M.L."/>
            <person name="Zaraisky A.G."/>
            <person name="Zhao X."/>
            <person name="Fang Y."/>
            <person name="Tan W."/>
            <person name="Lukyanov S.A."/>
        </authorList>
    </citation>
    <scope>NUCLEOTIDE SEQUENCE [MRNA]</scope>
    <scope>FUNCTION</scope>
    <scope>TISSUE SPECIFICITY</scope>
    <scope>MUTAGENESIS OF THR-68 AND ALA-143</scope>
</reference>
<reference evidence="3" key="2">
    <citation type="journal article" date="2005" name="J. Biol. Chem.">
        <title>Variations on the GFP chromophore: a polypeptide fragmentation within the chromophore revealed in the 2.1 A crystal structure of a nonfluorescent chromoprotein from Anemonia sulcata.</title>
        <authorList>
            <person name="Wilmann P.G."/>
            <person name="Petersen J."/>
            <person name="Devenish R.J."/>
            <person name="Prescott M."/>
            <person name="Rossjohn J."/>
        </authorList>
    </citation>
    <scope>X-RAY CRYSTALLOGRAPHY (2.1 ANGSTROMS)</scope>
    <scope>DEHYDROGENATION AT TYR-64</scope>
</reference>
<sequence>MASFLKKTMPFKTTIEGTVNGHYFKCTGKGEGNPFEGTQEMKIEVIEGGPLPFAFHILSTSCMYGSKTFIKYVSGIPDYFKQSFPEGFTWERTTTYEDGGFLTAHQDTSLDGDCLVYKVKILGNNFPADGPVMQNKAGRWEPATEIVYEVDGVLRGQSLMALKCPGGRHLTCHLHTTYRSKKPASALKMPGFHFEDHRIEIMEEVEKGKCYKQYEAAVGRYCDAAPSKLGHN</sequence>
<keyword id="KW-0002">3D-structure</keyword>
<keyword id="KW-0157">Chromophore</keyword>
<keyword id="KW-0455">Luminescence</keyword>
<keyword id="KW-0599">Photoprotein</keyword>
<name>NFCP_ANESU</name>
<feature type="chain" id="PRO_0000010860" description="GFP-like non-fluorescent chromoprotein FP595 chain 1">
    <location>
        <begin position="1"/>
        <end position="62"/>
    </location>
</feature>
<feature type="chain" id="PRO_0000010861" description="GFP-like non-fluorescent chromoprotein FP595 chain 2">
    <location>
        <begin position="63"/>
        <end position="232"/>
    </location>
</feature>
<feature type="site" description="Cleavage" evidence="2">
    <location>
        <begin position="62"/>
        <end position="63"/>
    </location>
</feature>
<feature type="modified residue" description="(E)-2,3-didehydrotyrosine" evidence="2">
    <location>
        <position position="64"/>
    </location>
</feature>
<feature type="cross-link" description="2-iminomethyl-5-imidazolinone (Met-Gly)" evidence="2">
    <location>
        <begin position="63"/>
        <end position="65"/>
    </location>
</feature>
<feature type="mutagenesis site" description="Increases fluorescence; when associated with S-143." evidence="1">
    <original>T</original>
    <variation>A</variation>
    <location>
        <position position="68"/>
    </location>
</feature>
<feature type="mutagenesis site" description="Produces a fluorescent form." evidence="1">
    <original>A</original>
    <variation>S</variation>
    <location>
        <position position="143"/>
    </location>
</feature>
<feature type="helix" evidence="5">
    <location>
        <begin position="2"/>
        <end position="4"/>
    </location>
</feature>
<feature type="strand" evidence="5">
    <location>
        <begin position="9"/>
        <end position="19"/>
    </location>
</feature>
<feature type="strand" evidence="5">
    <location>
        <begin position="22"/>
        <end position="33"/>
    </location>
</feature>
<feature type="turn" evidence="5">
    <location>
        <begin position="34"/>
        <end position="37"/>
    </location>
</feature>
<feature type="strand" evidence="5">
    <location>
        <begin position="38"/>
        <end position="48"/>
    </location>
</feature>
<feature type="helix" evidence="5">
    <location>
        <begin position="55"/>
        <end position="61"/>
    </location>
</feature>
<feature type="helix" evidence="5">
    <location>
        <begin position="81"/>
        <end position="83"/>
    </location>
</feature>
<feature type="turn" evidence="5">
    <location>
        <begin position="84"/>
        <end position="86"/>
    </location>
</feature>
<feature type="strand" evidence="5">
    <location>
        <begin position="88"/>
        <end position="96"/>
    </location>
</feature>
<feature type="strand" evidence="5">
    <location>
        <begin position="101"/>
        <end position="111"/>
    </location>
</feature>
<feature type="strand" evidence="5">
    <location>
        <begin position="114"/>
        <end position="124"/>
    </location>
</feature>
<feature type="turn" evidence="5">
    <location>
        <begin position="131"/>
        <end position="135"/>
    </location>
</feature>
<feature type="strand" evidence="5">
    <location>
        <begin position="143"/>
        <end position="150"/>
    </location>
</feature>
<feature type="strand" evidence="5">
    <location>
        <begin position="153"/>
        <end position="163"/>
    </location>
</feature>
<feature type="turn" evidence="6">
    <location>
        <begin position="165"/>
        <end position="167"/>
    </location>
</feature>
<feature type="strand" evidence="5">
    <location>
        <begin position="169"/>
        <end position="182"/>
    </location>
</feature>
<feature type="helix" evidence="5">
    <location>
        <begin position="184"/>
        <end position="186"/>
    </location>
</feature>
<feature type="strand" evidence="5">
    <location>
        <begin position="192"/>
        <end position="206"/>
    </location>
</feature>
<feature type="turn" evidence="5">
    <location>
        <begin position="207"/>
        <end position="209"/>
    </location>
</feature>
<feature type="strand" evidence="5">
    <location>
        <begin position="210"/>
        <end position="220"/>
    </location>
</feature>
<feature type="strand" evidence="5">
    <location>
        <begin position="228"/>
        <end position="230"/>
    </location>
</feature>
<evidence type="ECO:0000269" key="1">
    <source>
    </source>
</evidence>
<evidence type="ECO:0000269" key="2">
    <source>
    </source>
</evidence>
<evidence type="ECO:0000305" key="3"/>
<evidence type="ECO:0000312" key="4">
    <source>
        <dbReference type="EMBL" id="AAG02385.1"/>
    </source>
</evidence>
<evidence type="ECO:0007829" key="5">
    <source>
        <dbReference type="PDB" id="2A50"/>
    </source>
</evidence>
<evidence type="ECO:0007829" key="6">
    <source>
        <dbReference type="PDB" id="3CFA"/>
    </source>
</evidence>